<sequence>MIFIFISLFAKIFFNYNDFFTNSHVKIMAKSLLNYQFHQVKQTINTPVLIFIHGLFGDMDNLGVIARAFSEHYSILRIDLRNHGHSFHSEKMNYQLMAEDVIAVIRHLNLSKVILIGHSMGGKTAMKITALCPELVEKLIVIDMSPMPYEGFGHKDVFNGLFAVKNAKPENRQQAKPILKQEINDEDVVQFMLKSFDVNSADCFRFNLTALFNNYANIMDWEKVRVFTPTLFIKGGNSSYIKIENSEKILEQFPNATAFTINGSGHWVHAEKPDFVIRAIKRFLNKN</sequence>
<keyword id="KW-0378">Hydrolase</keyword>
<keyword id="KW-1185">Reference proteome</keyword>
<keyword id="KW-0719">Serine esterase</keyword>
<comment type="similarity">
    <text evidence="3">Belongs to the DmpD/TodF/XylF esterase family.</text>
</comment>
<feature type="chain" id="PRO_0000207082" description="Putative esterase/lipase HI_0193">
    <location>
        <begin position="1"/>
        <end position="287"/>
    </location>
</feature>
<feature type="domain" description="AB hydrolase-1" evidence="2">
    <location>
        <begin position="47"/>
        <end position="273"/>
    </location>
</feature>
<feature type="active site" evidence="1">
    <location>
        <position position="119"/>
    </location>
</feature>
<feature type="active site" evidence="1">
    <location>
        <position position="266"/>
    </location>
</feature>
<evidence type="ECO:0000250" key="1"/>
<evidence type="ECO:0000255" key="2"/>
<evidence type="ECO:0000305" key="3"/>
<accession>Q57427</accession>
<accession>O05013</accession>
<organism>
    <name type="scientific">Haemophilus influenzae (strain ATCC 51907 / DSM 11121 / KW20 / Rd)</name>
    <dbReference type="NCBI Taxonomy" id="71421"/>
    <lineage>
        <taxon>Bacteria</taxon>
        <taxon>Pseudomonadati</taxon>
        <taxon>Pseudomonadota</taxon>
        <taxon>Gammaproteobacteria</taxon>
        <taxon>Pasteurellales</taxon>
        <taxon>Pasteurellaceae</taxon>
        <taxon>Haemophilus</taxon>
    </lineage>
</organism>
<dbReference type="EC" id="3.1.-.-"/>
<dbReference type="EMBL" id="L42023">
    <property type="protein sequence ID" value="AAC21862.1"/>
    <property type="molecule type" value="Genomic_DNA"/>
</dbReference>
<dbReference type="PIR" id="E64053">
    <property type="entry name" value="E64053"/>
</dbReference>
<dbReference type="RefSeq" id="NP_438361.2">
    <property type="nucleotide sequence ID" value="NC_000907.1"/>
</dbReference>
<dbReference type="SMR" id="Q57427"/>
<dbReference type="STRING" id="71421.HI_0193"/>
<dbReference type="ESTHER" id="haein-HI0193">
    <property type="family name" value="ABHD11-Acetyl_transferase"/>
</dbReference>
<dbReference type="EnsemblBacteria" id="AAC21862">
    <property type="protein sequence ID" value="AAC21862"/>
    <property type="gene ID" value="HI_0193"/>
</dbReference>
<dbReference type="KEGG" id="hin:HI_0193"/>
<dbReference type="PATRIC" id="fig|71421.8.peg.197"/>
<dbReference type="eggNOG" id="COG0596">
    <property type="taxonomic scope" value="Bacteria"/>
</dbReference>
<dbReference type="HOGENOM" id="CLU_020336_53_1_6"/>
<dbReference type="OrthoDB" id="9808398at2"/>
<dbReference type="PhylomeDB" id="Q57427"/>
<dbReference type="Proteomes" id="UP000000579">
    <property type="component" value="Chromosome"/>
</dbReference>
<dbReference type="GO" id="GO:0052689">
    <property type="term" value="F:carboxylic ester hydrolase activity"/>
    <property type="evidence" value="ECO:0007669"/>
    <property type="project" value="UniProtKB-KW"/>
</dbReference>
<dbReference type="Gene3D" id="3.40.50.1820">
    <property type="entry name" value="alpha/beta hydrolase"/>
    <property type="match status" value="1"/>
</dbReference>
<dbReference type="InterPro" id="IPR000073">
    <property type="entry name" value="AB_hydrolase_1"/>
</dbReference>
<dbReference type="InterPro" id="IPR029058">
    <property type="entry name" value="AB_hydrolase_fold"/>
</dbReference>
<dbReference type="PANTHER" id="PTHR46118">
    <property type="entry name" value="PROTEIN ABHD11"/>
    <property type="match status" value="1"/>
</dbReference>
<dbReference type="PANTHER" id="PTHR46118:SF4">
    <property type="entry name" value="PROTEIN ABHD11"/>
    <property type="match status" value="1"/>
</dbReference>
<dbReference type="Pfam" id="PF00561">
    <property type="entry name" value="Abhydrolase_1"/>
    <property type="match status" value="1"/>
</dbReference>
<dbReference type="PRINTS" id="PR00111">
    <property type="entry name" value="ABHYDROLASE"/>
</dbReference>
<dbReference type="SUPFAM" id="SSF53474">
    <property type="entry name" value="alpha/beta-Hydrolases"/>
    <property type="match status" value="1"/>
</dbReference>
<proteinExistence type="inferred from homology"/>
<name>Y193_HAEIN</name>
<reference key="1">
    <citation type="journal article" date="1995" name="Science">
        <title>Whole-genome random sequencing and assembly of Haemophilus influenzae Rd.</title>
        <authorList>
            <person name="Fleischmann R.D."/>
            <person name="Adams M.D."/>
            <person name="White O."/>
            <person name="Clayton R.A."/>
            <person name="Kirkness E.F."/>
            <person name="Kerlavage A.R."/>
            <person name="Bult C.J."/>
            <person name="Tomb J.-F."/>
            <person name="Dougherty B.A."/>
            <person name="Merrick J.M."/>
            <person name="McKenney K."/>
            <person name="Sutton G.G."/>
            <person name="FitzHugh W."/>
            <person name="Fields C.A."/>
            <person name="Gocayne J.D."/>
            <person name="Scott J.D."/>
            <person name="Shirley R."/>
            <person name="Liu L.-I."/>
            <person name="Glodek A."/>
            <person name="Kelley J.M."/>
            <person name="Weidman J.F."/>
            <person name="Phillips C.A."/>
            <person name="Spriggs T."/>
            <person name="Hedblom E."/>
            <person name="Cotton M.D."/>
            <person name="Utterback T.R."/>
            <person name="Hanna M.C."/>
            <person name="Nguyen D.T."/>
            <person name="Saudek D.M."/>
            <person name="Brandon R.C."/>
            <person name="Fine L.D."/>
            <person name="Fritchman J.L."/>
            <person name="Fuhrmann J.L."/>
            <person name="Geoghagen N.S.M."/>
            <person name="Gnehm C.L."/>
            <person name="McDonald L.A."/>
            <person name="Small K.V."/>
            <person name="Fraser C.M."/>
            <person name="Smith H.O."/>
            <person name="Venter J.C."/>
        </authorList>
    </citation>
    <scope>NUCLEOTIDE SEQUENCE [LARGE SCALE GENOMIC DNA]</scope>
    <source>
        <strain>ATCC 51907 / DSM 11121 / KW20 / Rd</strain>
    </source>
</reference>
<gene>
    <name type="ordered locus">HI_0193</name>
</gene>
<protein>
    <recommendedName>
        <fullName>Putative esterase/lipase HI_0193</fullName>
        <ecNumber>3.1.-.-</ecNumber>
    </recommendedName>
</protein>